<gene>
    <name type="ordered locus">XAC0764</name>
</gene>
<organism>
    <name type="scientific">Xanthomonas axonopodis pv. citri (strain 306)</name>
    <dbReference type="NCBI Taxonomy" id="190486"/>
    <lineage>
        <taxon>Bacteria</taxon>
        <taxon>Pseudomonadati</taxon>
        <taxon>Pseudomonadota</taxon>
        <taxon>Gammaproteobacteria</taxon>
        <taxon>Lysobacterales</taxon>
        <taxon>Lysobacteraceae</taxon>
        <taxon>Xanthomonas</taxon>
    </lineage>
</organism>
<evidence type="ECO:0000255" key="1">
    <source>
        <dbReference type="HAMAP-Rule" id="MF_00048"/>
    </source>
</evidence>
<accession>Q8PPC2</accession>
<sequence length="122" mass="13320">MPAARQQRGAAVEAAARALLEQAGLRLVVGNANYRGGELDLVMHDGPSLVFVEVRYRRDDRFGGGAASVDWRKRRKLVLAAQLFLGAHPALAALPCRFDVVDASGEPPVLHWIRDAFRADDC</sequence>
<name>Y764_XANAC</name>
<proteinExistence type="inferred from homology"/>
<comment type="similarity">
    <text evidence="1">Belongs to the UPF0102 family.</text>
</comment>
<dbReference type="EMBL" id="AE008923">
    <property type="protein sequence ID" value="AAM35653.1"/>
    <property type="molecule type" value="Genomic_DNA"/>
</dbReference>
<dbReference type="RefSeq" id="WP_005910940.1">
    <property type="nucleotide sequence ID" value="NC_003919.1"/>
</dbReference>
<dbReference type="SMR" id="Q8PPC2"/>
<dbReference type="KEGG" id="xac:XAC0764"/>
<dbReference type="eggNOG" id="COG0792">
    <property type="taxonomic scope" value="Bacteria"/>
</dbReference>
<dbReference type="HOGENOM" id="CLU_115353_1_0_6"/>
<dbReference type="Proteomes" id="UP000000576">
    <property type="component" value="Chromosome"/>
</dbReference>
<dbReference type="GO" id="GO:0003676">
    <property type="term" value="F:nucleic acid binding"/>
    <property type="evidence" value="ECO:0007669"/>
    <property type="project" value="InterPro"/>
</dbReference>
<dbReference type="Gene3D" id="3.40.1350.10">
    <property type="match status" value="1"/>
</dbReference>
<dbReference type="HAMAP" id="MF_00048">
    <property type="entry name" value="UPF0102"/>
    <property type="match status" value="1"/>
</dbReference>
<dbReference type="InterPro" id="IPR011335">
    <property type="entry name" value="Restrct_endonuc-II-like"/>
</dbReference>
<dbReference type="InterPro" id="IPR011856">
    <property type="entry name" value="tRNA_endonuc-like_dom_sf"/>
</dbReference>
<dbReference type="InterPro" id="IPR003509">
    <property type="entry name" value="UPF0102_YraN-like"/>
</dbReference>
<dbReference type="NCBIfam" id="NF009150">
    <property type="entry name" value="PRK12497.1-3"/>
    <property type="match status" value="1"/>
</dbReference>
<dbReference type="NCBIfam" id="TIGR00252">
    <property type="entry name" value="YraN family protein"/>
    <property type="match status" value="1"/>
</dbReference>
<dbReference type="PANTHER" id="PTHR34039">
    <property type="entry name" value="UPF0102 PROTEIN YRAN"/>
    <property type="match status" value="1"/>
</dbReference>
<dbReference type="PANTHER" id="PTHR34039:SF1">
    <property type="entry name" value="UPF0102 PROTEIN YRAN"/>
    <property type="match status" value="1"/>
</dbReference>
<dbReference type="Pfam" id="PF02021">
    <property type="entry name" value="UPF0102"/>
    <property type="match status" value="1"/>
</dbReference>
<dbReference type="SUPFAM" id="SSF52980">
    <property type="entry name" value="Restriction endonuclease-like"/>
    <property type="match status" value="1"/>
</dbReference>
<reference key="1">
    <citation type="journal article" date="2002" name="Nature">
        <title>Comparison of the genomes of two Xanthomonas pathogens with differing host specificities.</title>
        <authorList>
            <person name="da Silva A.C.R."/>
            <person name="Ferro J.A."/>
            <person name="Reinach F.C."/>
            <person name="Farah C.S."/>
            <person name="Furlan L.R."/>
            <person name="Quaggio R.B."/>
            <person name="Monteiro-Vitorello C.B."/>
            <person name="Van Sluys M.A."/>
            <person name="Almeida N.F. Jr."/>
            <person name="Alves L.M.C."/>
            <person name="do Amaral A.M."/>
            <person name="Bertolini M.C."/>
            <person name="Camargo L.E.A."/>
            <person name="Camarotte G."/>
            <person name="Cannavan F."/>
            <person name="Cardozo J."/>
            <person name="Chambergo F."/>
            <person name="Ciapina L.P."/>
            <person name="Cicarelli R.M.B."/>
            <person name="Coutinho L.L."/>
            <person name="Cursino-Santos J.R."/>
            <person name="El-Dorry H."/>
            <person name="Faria J.B."/>
            <person name="Ferreira A.J.S."/>
            <person name="Ferreira R.C.C."/>
            <person name="Ferro M.I.T."/>
            <person name="Formighieri E.F."/>
            <person name="Franco M.C."/>
            <person name="Greggio C.C."/>
            <person name="Gruber A."/>
            <person name="Katsuyama A.M."/>
            <person name="Kishi L.T."/>
            <person name="Leite R.P."/>
            <person name="Lemos E.G.M."/>
            <person name="Lemos M.V.F."/>
            <person name="Locali E.C."/>
            <person name="Machado M.A."/>
            <person name="Madeira A.M.B.N."/>
            <person name="Martinez-Rossi N.M."/>
            <person name="Martins E.C."/>
            <person name="Meidanis J."/>
            <person name="Menck C.F.M."/>
            <person name="Miyaki C.Y."/>
            <person name="Moon D.H."/>
            <person name="Moreira L.M."/>
            <person name="Novo M.T.M."/>
            <person name="Okura V.K."/>
            <person name="Oliveira M.C."/>
            <person name="Oliveira V.R."/>
            <person name="Pereira H.A."/>
            <person name="Rossi A."/>
            <person name="Sena J.A.D."/>
            <person name="Silva C."/>
            <person name="de Souza R.F."/>
            <person name="Spinola L.A.F."/>
            <person name="Takita M.A."/>
            <person name="Tamura R.E."/>
            <person name="Teixeira E.C."/>
            <person name="Tezza R.I.D."/>
            <person name="Trindade dos Santos M."/>
            <person name="Truffi D."/>
            <person name="Tsai S.M."/>
            <person name="White F.F."/>
            <person name="Setubal J.C."/>
            <person name="Kitajima J.P."/>
        </authorList>
    </citation>
    <scope>NUCLEOTIDE SEQUENCE [LARGE SCALE GENOMIC DNA]</scope>
    <source>
        <strain>306</strain>
    </source>
</reference>
<feature type="chain" id="PRO_0000167392" description="UPF0102 protein XAC0764">
    <location>
        <begin position="1"/>
        <end position="122"/>
    </location>
</feature>
<protein>
    <recommendedName>
        <fullName evidence="1">UPF0102 protein XAC0764</fullName>
    </recommendedName>
</protein>